<gene>
    <name evidence="1" type="primary">psbL</name>
</gene>
<protein>
    <recommendedName>
        <fullName evidence="1">Photosystem II reaction center protein L</fullName>
        <shortName evidence="1">PSII-L</shortName>
    </recommendedName>
</protein>
<evidence type="ECO:0000255" key="1">
    <source>
        <dbReference type="HAMAP-Rule" id="MF_01317"/>
    </source>
</evidence>
<sequence length="38" mass="4497">MTQSNPNEQNVELNRTSLYWGLLLIFVLAVLFSNYFFN</sequence>
<organism>
    <name type="scientific">Zea mays</name>
    <name type="common">Maize</name>
    <dbReference type="NCBI Taxonomy" id="4577"/>
    <lineage>
        <taxon>Eukaryota</taxon>
        <taxon>Viridiplantae</taxon>
        <taxon>Streptophyta</taxon>
        <taxon>Embryophyta</taxon>
        <taxon>Tracheophyta</taxon>
        <taxon>Spermatophyta</taxon>
        <taxon>Magnoliopsida</taxon>
        <taxon>Liliopsida</taxon>
        <taxon>Poales</taxon>
        <taxon>Poaceae</taxon>
        <taxon>PACMAD clade</taxon>
        <taxon>Panicoideae</taxon>
        <taxon>Andropogonodae</taxon>
        <taxon>Andropogoneae</taxon>
        <taxon>Tripsacinae</taxon>
        <taxon>Zea</taxon>
    </lineage>
</organism>
<dbReference type="EMBL" id="J04502">
    <property type="protein sequence ID" value="AAA84476.1"/>
    <property type="molecule type" value="Genomic_DNA"/>
</dbReference>
<dbReference type="EMBL" id="X86563">
    <property type="protein sequence ID" value="CAA60300.1"/>
    <property type="molecule type" value="Genomic_DNA"/>
</dbReference>
<dbReference type="PIR" id="S58566">
    <property type="entry name" value="S58566"/>
</dbReference>
<dbReference type="RefSeq" id="NP_043039.1">
    <property type="nucleotide sequence ID" value="NC_001666.2"/>
</dbReference>
<dbReference type="SMR" id="P60138"/>
<dbReference type="FunCoup" id="P60138">
    <property type="interactions" value="217"/>
</dbReference>
<dbReference type="STRING" id="4577.P60138"/>
<dbReference type="GeneID" id="845209"/>
<dbReference type="KEGG" id="zma:845209"/>
<dbReference type="MaizeGDB" id="69558"/>
<dbReference type="InParanoid" id="P60138"/>
<dbReference type="OrthoDB" id="589260at2759"/>
<dbReference type="Proteomes" id="UP000007305">
    <property type="component" value="Chloroplast"/>
</dbReference>
<dbReference type="GO" id="GO:0009535">
    <property type="term" value="C:chloroplast thylakoid membrane"/>
    <property type="evidence" value="ECO:0007669"/>
    <property type="project" value="UniProtKB-SubCell"/>
</dbReference>
<dbReference type="GO" id="GO:0009539">
    <property type="term" value="C:photosystem II reaction center"/>
    <property type="evidence" value="ECO:0007669"/>
    <property type="project" value="InterPro"/>
</dbReference>
<dbReference type="GO" id="GO:0015979">
    <property type="term" value="P:photosynthesis"/>
    <property type="evidence" value="ECO:0007669"/>
    <property type="project" value="UniProtKB-UniRule"/>
</dbReference>
<dbReference type="HAMAP" id="MF_01317">
    <property type="entry name" value="PSII_PsbL"/>
    <property type="match status" value="1"/>
</dbReference>
<dbReference type="InterPro" id="IPR003372">
    <property type="entry name" value="PSII_PsbL"/>
</dbReference>
<dbReference type="InterPro" id="IPR037266">
    <property type="entry name" value="PSII_PsbL_sf"/>
</dbReference>
<dbReference type="NCBIfam" id="NF001972">
    <property type="entry name" value="PRK00753.1"/>
    <property type="match status" value="1"/>
</dbReference>
<dbReference type="Pfam" id="PF02419">
    <property type="entry name" value="PsbL"/>
    <property type="match status" value="1"/>
</dbReference>
<dbReference type="SUPFAM" id="SSF161017">
    <property type="entry name" value="Photosystem II reaction center protein L, PsbL"/>
    <property type="match status" value="1"/>
</dbReference>
<accession>P60138</accession>
<accession>O47030</accession>
<accession>P12166</accession>
<accession>P12167</accession>
<accession>Q34007</accession>
<name>PSBL_MAIZE</name>
<geneLocation type="chloroplast"/>
<reference key="1">
    <citation type="journal article" date="1989" name="Proc. Natl. Acad. Sci. U.S.A.">
        <title>A 4-kDa maize chloroplast polypeptide associated with the cytochrome b6-f complex: subunit 5, encoded by the chloroplast petE gene.</title>
        <authorList>
            <person name="Haley J."/>
            <person name="Bogorad L."/>
        </authorList>
    </citation>
    <scope>NUCLEOTIDE SEQUENCE [GENOMIC DNA]</scope>
    <source>
        <strain>cv. FR9cms X FR37</strain>
    </source>
</reference>
<reference key="2">
    <citation type="journal article" date="1995" name="J. Mol. Biol.">
        <title>Complete sequence of the maize chloroplast genome: gene content, hotspots of divergence and fine tuning of genetic information by transcript editing.</title>
        <authorList>
            <person name="Maier R.M."/>
            <person name="Neckermann K."/>
            <person name="Igloi G.L."/>
            <person name="Koessel H."/>
        </authorList>
    </citation>
    <scope>NUCLEOTIDE SEQUENCE [LARGE SCALE GENOMIC DNA]</scope>
    <source>
        <strain>cv. B73</strain>
    </source>
</reference>
<comment type="function">
    <text evidence="1">One of the components of the core complex of photosystem II (PSII). PSII is a light-driven water:plastoquinone oxidoreductase that uses light energy to abstract electrons from H(2)O, generating O(2) and a proton gradient subsequently used for ATP formation. It consists of a core antenna complex that captures photons, and an electron transfer chain that converts photonic excitation into a charge separation. This subunit is found at the monomer-monomer interface and is required for correct PSII assembly and/or dimerization.</text>
</comment>
<comment type="subunit">
    <text evidence="1">PSII is composed of 1 copy each of membrane proteins PsbA, PsbB, PsbC, PsbD, PsbE, PsbF, PsbH, PsbI, PsbJ, PsbK, PsbL, PsbM, PsbT, PsbX, PsbY, PsbZ, Psb30/Ycf12, at least 3 peripheral proteins of the oxygen-evolving complex and a large number of cofactors. It forms dimeric complexes.</text>
</comment>
<comment type="subcellular location">
    <subcellularLocation>
        <location evidence="1">Plastid</location>
        <location evidence="1">Chloroplast thylakoid membrane</location>
        <topology evidence="1">Single-pass membrane protein</topology>
    </subcellularLocation>
</comment>
<comment type="similarity">
    <text evidence="1">Belongs to the PsbL family.</text>
</comment>
<keyword id="KW-0150">Chloroplast</keyword>
<keyword id="KW-0472">Membrane</keyword>
<keyword id="KW-0602">Photosynthesis</keyword>
<keyword id="KW-0604">Photosystem II</keyword>
<keyword id="KW-0934">Plastid</keyword>
<keyword id="KW-0674">Reaction center</keyword>
<keyword id="KW-1185">Reference proteome</keyword>
<keyword id="KW-0793">Thylakoid</keyword>
<keyword id="KW-0812">Transmembrane</keyword>
<keyword id="KW-1133">Transmembrane helix</keyword>
<proteinExistence type="inferred from homology"/>
<feature type="chain" id="PRO_0000219739" description="Photosystem II reaction center protein L">
    <location>
        <begin position="1"/>
        <end position="38"/>
    </location>
</feature>
<feature type="transmembrane region" description="Helical" evidence="1">
    <location>
        <begin position="17"/>
        <end position="37"/>
    </location>
</feature>